<comment type="subcellular location">
    <subcellularLocation>
        <location evidence="2">Cell membrane</location>
        <topology evidence="2">Lipid-anchor</topology>
        <topology evidence="2">GPI-anchor</topology>
    </subcellularLocation>
</comment>
<dbReference type="EMBL" id="M23561">
    <property type="protein sequence ID" value="AAA28367.1"/>
    <property type="molecule type" value="Genomic_DNA"/>
</dbReference>
<dbReference type="EMBL" id="AE001572">
    <property type="protein sequence ID" value="AAD19797.1"/>
    <property type="molecule type" value="Genomic_DNA"/>
</dbReference>
<dbReference type="EMBL" id="AE014297">
    <property type="protein sequence ID" value="AAF54084.1"/>
    <property type="molecule type" value="Genomic_DNA"/>
</dbReference>
<dbReference type="EMBL" id="AY051911">
    <property type="protein sequence ID" value="AAK93335.1"/>
    <property type="molecule type" value="mRNA"/>
</dbReference>
<dbReference type="PIR" id="A31923">
    <property type="entry name" value="A31923"/>
</dbReference>
<dbReference type="RefSeq" id="NP_476579.1">
    <property type="nucleotide sequence ID" value="NM_057231.4"/>
</dbReference>
<dbReference type="RefSeq" id="NP_788589.1">
    <property type="nucleotide sequence ID" value="NM_176412.2"/>
</dbReference>
<dbReference type="SMR" id="P15364"/>
<dbReference type="BioGRID" id="66029">
    <property type="interactions" value="18"/>
</dbReference>
<dbReference type="DIP" id="DIP-19577N"/>
<dbReference type="FunCoup" id="P15364">
    <property type="interactions" value="17"/>
</dbReference>
<dbReference type="IntAct" id="P15364">
    <property type="interactions" value="6"/>
</dbReference>
<dbReference type="STRING" id="7227.FBpp0081135"/>
<dbReference type="GlyCosmos" id="P15364">
    <property type="glycosylation" value="3 sites, No reported glycans"/>
</dbReference>
<dbReference type="GlyGen" id="P15364">
    <property type="glycosylation" value="4 sites"/>
</dbReference>
<dbReference type="PaxDb" id="7227-FBpp0081135"/>
<dbReference type="DNASU" id="40831"/>
<dbReference type="EnsemblMetazoa" id="FBtr0081619">
    <property type="protein sequence ID" value="FBpp0081136"/>
    <property type="gene ID" value="FBgn0000071"/>
</dbReference>
<dbReference type="EnsemblMetazoa" id="FBtr0081620">
    <property type="protein sequence ID" value="FBpp0081137"/>
    <property type="gene ID" value="FBgn0000071"/>
</dbReference>
<dbReference type="GeneID" id="40831"/>
<dbReference type="KEGG" id="dme:Dmel_CG2198"/>
<dbReference type="UCSC" id="CG2198-RA">
    <property type="organism name" value="d. melanogaster"/>
</dbReference>
<dbReference type="AGR" id="FB:FBgn0000071"/>
<dbReference type="CTD" id="40831"/>
<dbReference type="FlyBase" id="FBgn0000071">
    <property type="gene designation" value="Ama"/>
</dbReference>
<dbReference type="VEuPathDB" id="VectorBase:FBgn0000071"/>
<dbReference type="eggNOG" id="KOG3510">
    <property type="taxonomic scope" value="Eukaryota"/>
</dbReference>
<dbReference type="GeneTree" id="ENSGT00940000174385"/>
<dbReference type="HOGENOM" id="CLU_027228_4_0_1"/>
<dbReference type="InParanoid" id="P15364"/>
<dbReference type="OrthoDB" id="10010359at2759"/>
<dbReference type="PhylomeDB" id="P15364"/>
<dbReference type="SignaLink" id="P15364"/>
<dbReference type="BioGRID-ORCS" id="40831">
    <property type="hits" value="0 hits in 3 CRISPR screens"/>
</dbReference>
<dbReference type="ChiTaRS" id="Ama">
    <property type="organism name" value="fly"/>
</dbReference>
<dbReference type="GenomeRNAi" id="40831"/>
<dbReference type="PRO" id="PR:P15364"/>
<dbReference type="Proteomes" id="UP000000803">
    <property type="component" value="Chromosome 3R"/>
</dbReference>
<dbReference type="Bgee" id="FBgn0000071">
    <property type="expression patterns" value="Expressed in embryonic/larval hemocyte (Drosophila) and 54 other cell types or tissues"/>
</dbReference>
<dbReference type="ExpressionAtlas" id="P15364">
    <property type="expression patterns" value="baseline and differential"/>
</dbReference>
<dbReference type="GO" id="GO:0005615">
    <property type="term" value="C:extracellular space"/>
    <property type="evidence" value="ECO:0000314"/>
    <property type="project" value="FlyBase"/>
</dbReference>
<dbReference type="GO" id="GO:0005886">
    <property type="term" value="C:plasma membrane"/>
    <property type="evidence" value="ECO:0000314"/>
    <property type="project" value="FlyBase"/>
</dbReference>
<dbReference type="GO" id="GO:0098552">
    <property type="term" value="C:side of membrane"/>
    <property type="evidence" value="ECO:0007669"/>
    <property type="project" value="UniProtKB-KW"/>
</dbReference>
<dbReference type="GO" id="GO:0048018">
    <property type="term" value="F:receptor ligand activity"/>
    <property type="evidence" value="ECO:0000314"/>
    <property type="project" value="FlyBase"/>
</dbReference>
<dbReference type="GO" id="GO:0007157">
    <property type="term" value="P:heterophilic cell-cell adhesion via plasma membrane cell adhesion molecules"/>
    <property type="evidence" value="ECO:0000353"/>
    <property type="project" value="FlyBase"/>
</dbReference>
<dbReference type="GO" id="GO:0035633">
    <property type="term" value="P:maintenance of blood-brain barrier"/>
    <property type="evidence" value="ECO:0000315"/>
    <property type="project" value="FlyBase"/>
</dbReference>
<dbReference type="GO" id="GO:0045742">
    <property type="term" value="P:positive regulation of epidermal growth factor receptor signaling pathway"/>
    <property type="evidence" value="ECO:0000316"/>
    <property type="project" value="FlyBase"/>
</dbReference>
<dbReference type="GO" id="GO:1903977">
    <property type="term" value="P:positive regulation of glial cell migration"/>
    <property type="evidence" value="ECO:0000315"/>
    <property type="project" value="FlyBase"/>
</dbReference>
<dbReference type="GO" id="GO:0060252">
    <property type="term" value="P:positive regulation of glial cell proliferation"/>
    <property type="evidence" value="ECO:0000315"/>
    <property type="project" value="FlyBase"/>
</dbReference>
<dbReference type="CDD" id="cd00096">
    <property type="entry name" value="Ig"/>
    <property type="match status" value="1"/>
</dbReference>
<dbReference type="FunFam" id="2.60.40.10:FF:002408">
    <property type="entry name" value="Blast:Protein amalgam"/>
    <property type="match status" value="1"/>
</dbReference>
<dbReference type="FunFam" id="2.60.40.10:FF:000005">
    <property type="entry name" value="Neuronal cell adhesion molecule"/>
    <property type="match status" value="1"/>
</dbReference>
<dbReference type="Gene3D" id="2.60.40.10">
    <property type="entry name" value="Immunoglobulins"/>
    <property type="match status" value="3"/>
</dbReference>
<dbReference type="InterPro" id="IPR050958">
    <property type="entry name" value="Cell_Adh-Cytoskel_Orgn"/>
</dbReference>
<dbReference type="InterPro" id="IPR007110">
    <property type="entry name" value="Ig-like_dom"/>
</dbReference>
<dbReference type="InterPro" id="IPR036179">
    <property type="entry name" value="Ig-like_dom_sf"/>
</dbReference>
<dbReference type="InterPro" id="IPR013783">
    <property type="entry name" value="Ig-like_fold"/>
</dbReference>
<dbReference type="InterPro" id="IPR013098">
    <property type="entry name" value="Ig_I-set"/>
</dbReference>
<dbReference type="InterPro" id="IPR003599">
    <property type="entry name" value="Ig_sub"/>
</dbReference>
<dbReference type="InterPro" id="IPR003598">
    <property type="entry name" value="Ig_sub2"/>
</dbReference>
<dbReference type="PANTHER" id="PTHR45080">
    <property type="entry name" value="CONTACTIN 5"/>
    <property type="match status" value="1"/>
</dbReference>
<dbReference type="PANTHER" id="PTHR45080:SF8">
    <property type="entry name" value="IG-LIKE DOMAIN-CONTAINING PROTEIN"/>
    <property type="match status" value="1"/>
</dbReference>
<dbReference type="Pfam" id="PF07679">
    <property type="entry name" value="I-set"/>
    <property type="match status" value="2"/>
</dbReference>
<dbReference type="Pfam" id="PF13927">
    <property type="entry name" value="Ig_3"/>
    <property type="match status" value="1"/>
</dbReference>
<dbReference type="SMART" id="SM00409">
    <property type="entry name" value="IG"/>
    <property type="match status" value="3"/>
</dbReference>
<dbReference type="SMART" id="SM00408">
    <property type="entry name" value="IGc2"/>
    <property type="match status" value="3"/>
</dbReference>
<dbReference type="SUPFAM" id="SSF48726">
    <property type="entry name" value="Immunoglobulin"/>
    <property type="match status" value="3"/>
</dbReference>
<dbReference type="PROSITE" id="PS50835">
    <property type="entry name" value="IG_LIKE"/>
    <property type="match status" value="3"/>
</dbReference>
<reference key="1">
    <citation type="journal article" date="1988" name="Cell">
        <title>Characterization of amalgam: a member of the immunoglobulin superfamily from Drosophila.</title>
        <authorList>
            <person name="Seeger M.A."/>
            <person name="Haffley L."/>
            <person name="Kaufman T.C."/>
        </authorList>
    </citation>
    <scope>NUCLEOTIDE SEQUENCE [GENOMIC DNA]</scope>
    <source>
        <strain>Oregon-R</strain>
    </source>
</reference>
<reference key="2">
    <citation type="submission" date="1999-01" db="EMBL/GenBank/DDBJ databases">
        <title>Complete sequence of the Antennapedia complex of Drosophila.</title>
        <authorList>
            <person name="Celniker S.E."/>
            <person name="Pfeiffer B.D."/>
            <person name="Knafels J."/>
            <person name="Martin C.H."/>
            <person name="Mayeda C.A."/>
            <person name="Palazzolo M.J."/>
        </authorList>
    </citation>
    <scope>NUCLEOTIDE SEQUENCE [GENOMIC DNA]</scope>
    <source>
        <strain>Berkeley</strain>
    </source>
</reference>
<reference key="3">
    <citation type="journal article" date="2000" name="Science">
        <title>The genome sequence of Drosophila melanogaster.</title>
        <authorList>
            <person name="Adams M.D."/>
            <person name="Celniker S.E."/>
            <person name="Holt R.A."/>
            <person name="Evans C.A."/>
            <person name="Gocayne J.D."/>
            <person name="Amanatides P.G."/>
            <person name="Scherer S.E."/>
            <person name="Li P.W."/>
            <person name="Hoskins R.A."/>
            <person name="Galle R.F."/>
            <person name="George R.A."/>
            <person name="Lewis S.E."/>
            <person name="Richards S."/>
            <person name="Ashburner M."/>
            <person name="Henderson S.N."/>
            <person name="Sutton G.G."/>
            <person name="Wortman J.R."/>
            <person name="Yandell M.D."/>
            <person name="Zhang Q."/>
            <person name="Chen L.X."/>
            <person name="Brandon R.C."/>
            <person name="Rogers Y.-H.C."/>
            <person name="Blazej R.G."/>
            <person name="Champe M."/>
            <person name="Pfeiffer B.D."/>
            <person name="Wan K.H."/>
            <person name="Doyle C."/>
            <person name="Baxter E.G."/>
            <person name="Helt G."/>
            <person name="Nelson C.R."/>
            <person name="Miklos G.L.G."/>
            <person name="Abril J.F."/>
            <person name="Agbayani A."/>
            <person name="An H.-J."/>
            <person name="Andrews-Pfannkoch C."/>
            <person name="Baldwin D."/>
            <person name="Ballew R.M."/>
            <person name="Basu A."/>
            <person name="Baxendale J."/>
            <person name="Bayraktaroglu L."/>
            <person name="Beasley E.M."/>
            <person name="Beeson K.Y."/>
            <person name="Benos P.V."/>
            <person name="Berman B.P."/>
            <person name="Bhandari D."/>
            <person name="Bolshakov S."/>
            <person name="Borkova D."/>
            <person name="Botchan M.R."/>
            <person name="Bouck J."/>
            <person name="Brokstein P."/>
            <person name="Brottier P."/>
            <person name="Burtis K.C."/>
            <person name="Busam D.A."/>
            <person name="Butler H."/>
            <person name="Cadieu E."/>
            <person name="Center A."/>
            <person name="Chandra I."/>
            <person name="Cherry J.M."/>
            <person name="Cawley S."/>
            <person name="Dahlke C."/>
            <person name="Davenport L.B."/>
            <person name="Davies P."/>
            <person name="de Pablos B."/>
            <person name="Delcher A."/>
            <person name="Deng Z."/>
            <person name="Mays A.D."/>
            <person name="Dew I."/>
            <person name="Dietz S.M."/>
            <person name="Dodson K."/>
            <person name="Doup L.E."/>
            <person name="Downes M."/>
            <person name="Dugan-Rocha S."/>
            <person name="Dunkov B.C."/>
            <person name="Dunn P."/>
            <person name="Durbin K.J."/>
            <person name="Evangelista C.C."/>
            <person name="Ferraz C."/>
            <person name="Ferriera S."/>
            <person name="Fleischmann W."/>
            <person name="Fosler C."/>
            <person name="Gabrielian A.E."/>
            <person name="Garg N.S."/>
            <person name="Gelbart W.M."/>
            <person name="Glasser K."/>
            <person name="Glodek A."/>
            <person name="Gong F."/>
            <person name="Gorrell J.H."/>
            <person name="Gu Z."/>
            <person name="Guan P."/>
            <person name="Harris M."/>
            <person name="Harris N.L."/>
            <person name="Harvey D.A."/>
            <person name="Heiman T.J."/>
            <person name="Hernandez J.R."/>
            <person name="Houck J."/>
            <person name="Hostin D."/>
            <person name="Houston K.A."/>
            <person name="Howland T.J."/>
            <person name="Wei M.-H."/>
            <person name="Ibegwam C."/>
            <person name="Jalali M."/>
            <person name="Kalush F."/>
            <person name="Karpen G.H."/>
            <person name="Ke Z."/>
            <person name="Kennison J.A."/>
            <person name="Ketchum K.A."/>
            <person name="Kimmel B.E."/>
            <person name="Kodira C.D."/>
            <person name="Kraft C.L."/>
            <person name="Kravitz S."/>
            <person name="Kulp D."/>
            <person name="Lai Z."/>
            <person name="Lasko P."/>
            <person name="Lei Y."/>
            <person name="Levitsky A.A."/>
            <person name="Li J.H."/>
            <person name="Li Z."/>
            <person name="Liang Y."/>
            <person name="Lin X."/>
            <person name="Liu X."/>
            <person name="Mattei B."/>
            <person name="McIntosh T.C."/>
            <person name="McLeod M.P."/>
            <person name="McPherson D."/>
            <person name="Merkulov G."/>
            <person name="Milshina N.V."/>
            <person name="Mobarry C."/>
            <person name="Morris J."/>
            <person name="Moshrefi A."/>
            <person name="Mount S.M."/>
            <person name="Moy M."/>
            <person name="Murphy B."/>
            <person name="Murphy L."/>
            <person name="Muzny D.M."/>
            <person name="Nelson D.L."/>
            <person name="Nelson D.R."/>
            <person name="Nelson K.A."/>
            <person name="Nixon K."/>
            <person name="Nusskern D.R."/>
            <person name="Pacleb J.M."/>
            <person name="Palazzolo M."/>
            <person name="Pittman G.S."/>
            <person name="Pan S."/>
            <person name="Pollard J."/>
            <person name="Puri V."/>
            <person name="Reese M.G."/>
            <person name="Reinert K."/>
            <person name="Remington K."/>
            <person name="Saunders R.D.C."/>
            <person name="Scheeler F."/>
            <person name="Shen H."/>
            <person name="Shue B.C."/>
            <person name="Siden-Kiamos I."/>
            <person name="Simpson M."/>
            <person name="Skupski M.P."/>
            <person name="Smith T.J."/>
            <person name="Spier E."/>
            <person name="Spradling A.C."/>
            <person name="Stapleton M."/>
            <person name="Strong R."/>
            <person name="Sun E."/>
            <person name="Svirskas R."/>
            <person name="Tector C."/>
            <person name="Turner R."/>
            <person name="Venter E."/>
            <person name="Wang A.H."/>
            <person name="Wang X."/>
            <person name="Wang Z.-Y."/>
            <person name="Wassarman D.A."/>
            <person name="Weinstock G.M."/>
            <person name="Weissenbach J."/>
            <person name="Williams S.M."/>
            <person name="Woodage T."/>
            <person name="Worley K.C."/>
            <person name="Wu D."/>
            <person name="Yang S."/>
            <person name="Yao Q.A."/>
            <person name="Ye J."/>
            <person name="Yeh R.-F."/>
            <person name="Zaveri J.S."/>
            <person name="Zhan M."/>
            <person name="Zhang G."/>
            <person name="Zhao Q."/>
            <person name="Zheng L."/>
            <person name="Zheng X.H."/>
            <person name="Zhong F.N."/>
            <person name="Zhong W."/>
            <person name="Zhou X."/>
            <person name="Zhu S.C."/>
            <person name="Zhu X."/>
            <person name="Smith H.O."/>
            <person name="Gibbs R.A."/>
            <person name="Myers E.W."/>
            <person name="Rubin G.M."/>
            <person name="Venter J.C."/>
        </authorList>
    </citation>
    <scope>NUCLEOTIDE SEQUENCE [LARGE SCALE GENOMIC DNA]</scope>
    <source>
        <strain>Berkeley</strain>
    </source>
</reference>
<reference key="4">
    <citation type="journal article" date="2002" name="Genome Biol.">
        <title>Annotation of the Drosophila melanogaster euchromatic genome: a systematic review.</title>
        <authorList>
            <person name="Misra S."/>
            <person name="Crosby M.A."/>
            <person name="Mungall C.J."/>
            <person name="Matthews B.B."/>
            <person name="Campbell K.S."/>
            <person name="Hradecky P."/>
            <person name="Huang Y."/>
            <person name="Kaminker J.S."/>
            <person name="Millburn G.H."/>
            <person name="Prochnik S.E."/>
            <person name="Smith C.D."/>
            <person name="Tupy J.L."/>
            <person name="Whitfield E.J."/>
            <person name="Bayraktaroglu L."/>
            <person name="Berman B.P."/>
            <person name="Bettencourt B.R."/>
            <person name="Celniker S.E."/>
            <person name="de Grey A.D.N.J."/>
            <person name="Drysdale R.A."/>
            <person name="Harris N.L."/>
            <person name="Richter J."/>
            <person name="Russo S."/>
            <person name="Schroeder A.J."/>
            <person name="Shu S.Q."/>
            <person name="Stapleton M."/>
            <person name="Yamada C."/>
            <person name="Ashburner M."/>
            <person name="Gelbart W.M."/>
            <person name="Rubin G.M."/>
            <person name="Lewis S.E."/>
        </authorList>
    </citation>
    <scope>GENOME REANNOTATION</scope>
    <source>
        <strain>Berkeley</strain>
    </source>
</reference>
<reference key="5">
    <citation type="journal article" date="2002" name="Genome Biol.">
        <title>A Drosophila full-length cDNA resource.</title>
        <authorList>
            <person name="Stapleton M."/>
            <person name="Carlson J.W."/>
            <person name="Brokstein P."/>
            <person name="Yu C."/>
            <person name="Champe M."/>
            <person name="George R.A."/>
            <person name="Guarin H."/>
            <person name="Kronmiller B."/>
            <person name="Pacleb J.M."/>
            <person name="Park S."/>
            <person name="Wan K.H."/>
            <person name="Rubin G.M."/>
            <person name="Celniker S.E."/>
        </authorList>
    </citation>
    <scope>NUCLEOTIDE SEQUENCE [LARGE SCALE MRNA]</scope>
    <source>
        <strain>Berkeley</strain>
        <tissue>Embryo</tissue>
    </source>
</reference>
<sequence>MARLRLLIGLIFCLAISLDSVLSAPVISQISKDVVASVGDSVEFNCTVEEVGQLSVSWAKRPSESDTNSVVLSMRNILSLPDQRYNVTVTEGPKTGSAIYTFRIQNIEVSDMGPYECQVLVSATEKVTKKLSLQIKTPPVIAENTPKSTLVTEGQNLELTCHANGFPKPTISWAREHNAVMPAGGHLLAEPTLRIRSVHRMDRGGYYCIAQNGEGQPDKRLIRVEVEFRPQIAVQRPKIAQMVSHSAELECSVQGYPAPTVVWHKNGVPLQSSRHHEVANTASSSGTTTSVLRIDSVGEEDFGDYYCNATNKLGHADARLHLFQTVIPVPSLS</sequence>
<name>AMAL_DROME</name>
<gene>
    <name type="primary">Ama</name>
    <name type="ORF">CG2198</name>
</gene>
<evidence type="ECO:0000255" key="1"/>
<evidence type="ECO:0000305" key="2"/>
<accession>P15364</accession>
<accession>Q9V3A5</accession>
<protein>
    <recommendedName>
        <fullName>Protein amalgam</fullName>
    </recommendedName>
</protein>
<organism>
    <name type="scientific">Drosophila melanogaster</name>
    <name type="common">Fruit fly</name>
    <dbReference type="NCBI Taxonomy" id="7227"/>
    <lineage>
        <taxon>Eukaryota</taxon>
        <taxon>Metazoa</taxon>
        <taxon>Ecdysozoa</taxon>
        <taxon>Arthropoda</taxon>
        <taxon>Hexapoda</taxon>
        <taxon>Insecta</taxon>
        <taxon>Pterygota</taxon>
        <taxon>Neoptera</taxon>
        <taxon>Endopterygota</taxon>
        <taxon>Diptera</taxon>
        <taxon>Brachycera</taxon>
        <taxon>Muscomorpha</taxon>
        <taxon>Ephydroidea</taxon>
        <taxon>Drosophilidae</taxon>
        <taxon>Drosophila</taxon>
        <taxon>Sophophora</taxon>
    </lineage>
</organism>
<keyword id="KW-1003">Cell membrane</keyword>
<keyword id="KW-1015">Disulfide bond</keyword>
<keyword id="KW-0325">Glycoprotein</keyword>
<keyword id="KW-0336">GPI-anchor</keyword>
<keyword id="KW-0393">Immunoglobulin domain</keyword>
<keyword id="KW-0449">Lipoprotein</keyword>
<keyword id="KW-0472">Membrane</keyword>
<keyword id="KW-1185">Reference proteome</keyword>
<keyword id="KW-0677">Repeat</keyword>
<keyword id="KW-0732">Signal</keyword>
<proteinExistence type="evidence at transcript level"/>
<feature type="signal peptide" evidence="1">
    <location>
        <begin position="1"/>
        <end position="23"/>
    </location>
</feature>
<feature type="chain" id="PRO_0000014504" description="Protein amalgam">
    <location>
        <begin position="24"/>
        <end status="unknown"/>
    </location>
</feature>
<feature type="propeptide" id="PRO_0000014505" description="Removed in mature form" evidence="1">
    <location>
        <begin status="unknown"/>
        <end position="333"/>
    </location>
</feature>
<feature type="domain" description="Ig-like V-type">
    <location>
        <begin position="25"/>
        <end position="128"/>
    </location>
</feature>
<feature type="domain" description="Ig-like C2-type 1">
    <location>
        <begin position="139"/>
        <end position="223"/>
    </location>
</feature>
<feature type="domain" description="Ig-like C2-type 2">
    <location>
        <begin position="230"/>
        <end position="323"/>
    </location>
</feature>
<feature type="glycosylation site" description="N-linked (GlcNAc...) asparagine" evidence="1">
    <location>
        <position position="45"/>
    </location>
</feature>
<feature type="glycosylation site" description="N-linked (GlcNAc...) asparagine" evidence="1">
    <location>
        <position position="86"/>
    </location>
</feature>
<feature type="glycosylation site" description="N-linked (GlcNAc...) asparagine" evidence="1">
    <location>
        <position position="308"/>
    </location>
</feature>
<feature type="disulfide bond" evidence="2">
    <location>
        <begin position="46"/>
        <end position="117"/>
    </location>
</feature>
<feature type="disulfide bond" evidence="2">
    <location>
        <begin position="161"/>
        <end position="208"/>
    </location>
</feature>
<feature type="disulfide bond" evidence="2">
    <location>
        <begin position="251"/>
        <end position="307"/>
    </location>
</feature>
<feature type="sequence conflict" description="In Ref. 1; AAA28367." evidence="2" ref="1">
    <original>Q</original>
    <variation>K</variation>
    <location>
        <position position="83"/>
    </location>
</feature>